<reference key="1">
    <citation type="journal article" date="1991" name="J. Biol. Chem.">
        <title>Cloning, expression, and nucleotide sequence of rat liver sterol carrier protein 2 cDNAs.</title>
        <authorList>
            <person name="Seedorf U."/>
            <person name="Assmann G."/>
        </authorList>
    </citation>
    <scope>NUCLEOTIDE SEQUENCE [MRNA]</scope>
    <source>
        <strain>Wistar</strain>
        <tissue>Liver</tissue>
    </source>
</reference>
<reference key="2">
    <citation type="journal article" date="1991" name="Proc. Natl. Acad. Sci. U.S.A.">
        <title>Molecular cloning and deduced amino acid sequence of nonspecific lipid transfer protein (sterol carrier protein 2) of rat liver: a higher molecular mass (60 kDa) protein contains the primary sequence of nonspecific lipid transfer protein as its C-terminal part.</title>
        <authorList>
            <person name="Mori T."/>
            <person name="Tsukamoto T."/>
            <person name="Mori H."/>
            <person name="Tashiro Y."/>
            <person name="Fujiki Y."/>
        </authorList>
    </citation>
    <scope>NUCLEOTIDE SEQUENCE [MRNA]</scope>
</reference>
<reference key="3">
    <citation type="journal article" date="1991" name="Eur. J. Biochem.">
        <title>Identification of the cDNA clone which encodes the 58-kDa protein containing the amino acid sequence of rat liver non-specific lipid-transfer protein (sterol-carrier protein 2). Homology with rat peroxisomal and mitochondrial 3-oxoacyl-CoA thiolases.</title>
        <authorList>
            <person name="Ossendorp B.C."/>
            <person name="van Heusden G.P.H."/>
            <person name="de Beer A.L.J."/>
            <person name="Bos K."/>
            <person name="Schouten G.L."/>
            <person name="Wirtz K.W.A."/>
        </authorList>
    </citation>
    <scope>NUCLEOTIDE SEQUENCE [MRNA]</scope>
</reference>
<reference key="4">
    <citation type="journal article" date="2004" name="Genome Res.">
        <title>The status, quality, and expansion of the NIH full-length cDNA project: the Mammalian Gene Collection (MGC).</title>
        <authorList>
            <consortium name="The MGC Project Team"/>
        </authorList>
    </citation>
    <scope>NUCLEOTIDE SEQUENCE [LARGE SCALE MRNA]</scope>
    <source>
        <tissue>Kidney</tissue>
    </source>
</reference>
<reference key="5">
    <citation type="journal article" date="1990" name="Biochem. Biophys. Res. Commun.">
        <title>The amino acid sequence of rat liver non-specific lipid transfer protein (sterol carrier protein 2) is present in a high molecular weight protein: evidence from cDNA analysis.</title>
        <authorList>
            <person name="Ossendorp B.C."/>
            <person name="van Heusden G.P.H."/>
            <person name="Wirtz K.W.A."/>
        </authorList>
    </citation>
    <scope>NUCLEOTIDE SEQUENCE [MRNA] OF 33-547</scope>
    <source>
        <tissue>Liver</tissue>
    </source>
</reference>
<reference key="6">
    <citation type="journal article" date="1990" name="DNA Cell Biol.">
        <title>Characterization of a cDNA encoding rat sterol carrier protein2.</title>
        <authorList>
            <person name="Billheimer J.T."/>
            <person name="Strehl L.L."/>
            <person name="Davis G.L."/>
            <person name="Strauss J.F. III"/>
            <person name="Davis L.G."/>
        </authorList>
    </citation>
    <scope>NUCLEOTIDE SEQUENCE [MRNA] OF 275-547</scope>
    <source>
        <strain>CD Charles River</strain>
        <tissue>Liver</tissue>
    </source>
</reference>
<reference key="7">
    <citation type="journal article" date="1987" name="J. Biol. Chem.">
        <title>Primary sequence and structural analysis of sterol carrier protein 2 from rat liver: homology with immunoglobulins.</title>
        <authorList>
            <person name="Pastuszyn A."/>
            <person name="Noland B.J."/>
            <person name="Bazan J.F."/>
            <person name="Fletterick R.J."/>
            <person name="Scallen T.J."/>
        </authorList>
    </citation>
    <scope>PROTEIN SEQUENCE OF 425-547</scope>
    <source>
        <tissue>Liver</tissue>
    </source>
</reference>
<reference key="8">
    <citation type="journal article" date="1988" name="Biochem. Biophys. Res. Commun.">
        <title>A mass spectrometric study of the structure of sterol carrier protein SCP2 from rat liver.</title>
        <authorList>
            <person name="Morris H.R."/>
            <person name="Larsen B.S."/>
            <person name="Billheimer J.T."/>
        </authorList>
    </citation>
    <scope>PROTEIN SEQUENCE OF 425-547</scope>
    <source>
        <tissue>Liver</tissue>
    </source>
</reference>
<reference key="9">
    <citation type="journal article" date="1997" name="J. Biol. Chem.">
        <title>Substrate specificities of 3-oxoacyl-CoA thiolase A and sterol carrier protein 2/3-oxoacyl-CoA thiolase purified from normal rat liver peroxisomes. Sterol carrier protein 2/3-oxoacyl-CoA thiolase is involved in the metabolism of 2-methyl-branched fatty acids and bile acid intermediates.</title>
        <authorList>
            <person name="Antonenkov V.D."/>
            <person name="Van Veldhoven P.P."/>
            <person name="Waelkens E."/>
            <person name="Mannaerts G.P."/>
        </authorList>
    </citation>
    <scope>PROTEIN SEQUENCE OF 24-33; 354-363 AND 525-534</scope>
    <scope>CATALYTIC ACTIVITY</scope>
    <scope>FUNCTION</scope>
    <scope>SUBCELLULAR LOCATION</scope>
    <scope>TISSUE SPECIFICITY</scope>
</reference>
<reference key="10">
    <citation type="journal article" date="1994" name="J. Biol. Chem.">
        <title>Sterol carrier protein X is peroxisomal 3-oxoacyl coenzyme A thiolase with intrinsic sterol carrier and lipid transfer activity.</title>
        <authorList>
            <person name="Seedorf U."/>
            <person name="Brysch P."/>
            <person name="Engel T."/>
            <person name="Schrage K."/>
            <person name="Assmann G."/>
        </authorList>
    </citation>
    <scope>FUNCTION</scope>
    <scope>CATALYTIC ACTIVITY</scope>
    <scope>TISSUE SPECIFICITY</scope>
    <scope>SUBCELLULAR LOCATION</scope>
</reference>
<reference key="11">
    <citation type="journal article" date="1997" name="Biochem. Biophys. Res. Commun.">
        <title>Sterol carrier protein X (SCPx) is a peroxisomal branched-chain beta-ketothiolase specifically reacting with 3-oxo-pristanoyl-CoA: a new, unique role for SCPx in branched-chain fatty acid metabolism in peroxisomes.</title>
        <authorList>
            <person name="Wanders R.J."/>
            <person name="Denis S."/>
            <person name="Wouters F."/>
            <person name="Wirtz K.W."/>
            <person name="Seedorf U."/>
        </authorList>
    </citation>
    <scope>FUNCTION (ISOFORM SCPX)</scope>
    <scope>CATALYTIC ACTIVITY</scope>
</reference>
<reference key="12">
    <citation type="journal article" date="1998" name="Genes Dev.">
        <title>Defective peroxisomal catabolism of branched fatty acyl coenzyme A in mice lacking the sterol carrier protein-2/sterol carrier protein-x gene function.</title>
        <authorList>
            <person name="Seedorf U."/>
            <person name="Raabe M."/>
            <person name="Ellinghaus P."/>
            <person name="Kannenberg F."/>
            <person name="Fobker M."/>
            <person name="Engel T."/>
            <person name="Denis S."/>
            <person name="Wouters F."/>
            <person name="Wirtz K.W."/>
            <person name="Wanders R.J."/>
            <person name="Maeda N."/>
            <person name="Assmann G."/>
        </authorList>
    </citation>
    <scope>FUNCTION</scope>
    <scope>CATALYTIC ACTIVITY</scope>
</reference>
<reference key="13">
    <citation type="journal article" date="2000" name="J. Lipid Res.">
        <title>Peroxisomal fatty acid oxidation disorders and 58 kDa sterol carrier protein X (SCPx). Activity measurements in liver and fibroblasts using a newly developed method.</title>
        <authorList>
            <person name="Ferdinandusse S."/>
            <person name="Denis S."/>
            <person name="van Berkel E."/>
            <person name="Dacremont G."/>
            <person name="Wanders R.J."/>
        </authorList>
    </citation>
    <scope>CATALYTIC ACTIVITY</scope>
    <scope>FUNCTION (ISOFORM SCPX)</scope>
    <scope>BIOPHYSICOCHEMICAL PROPERTIES</scope>
</reference>
<reference key="14">
    <citation type="journal article" date="2012" name="Nat. Commun.">
        <title>Quantitative maps of protein phosphorylation sites across 14 different rat organs and tissues.</title>
        <authorList>
            <person name="Lundby A."/>
            <person name="Secher A."/>
            <person name="Lage K."/>
            <person name="Nordsborg N.B."/>
            <person name="Dmytriyev A."/>
            <person name="Lundby C."/>
            <person name="Olsen J.V."/>
        </authorList>
    </citation>
    <scope>PHOSPHORYLATION [LARGE SCALE ANALYSIS] AT SER-3; SER-8 AND SER-537</scope>
    <scope>IDENTIFICATION BY MASS SPECTROMETRY [LARGE SCALE ANALYSIS]</scope>
</reference>
<sequence>MPSVALNSPRLPRVFVVGVGMTKFMKPGGENSRDYPDLAKEAGQKALADRQIPYSAVEQACVGYVYGESTCGQRAIYHSLGLTGIPIINVNNNCSTGSTALFMAQQLVQGGLANCVLALGFEKMEKGSLGTKYSDRSNPLEKHIDVLINKYGMSACPFAPQLFGSAGKEHMETYGTKVEHFAKIGWKNHKHSVNNPYSQFQDEYSLDEIMKSRPVFDFLTVLQCCPTSDGAAAAIVSSEEFVQKHGLQSKAVEIVAQEMVTDMPSTFEEKSVIKMVGYDMSKEAARKCYEKSGLGPSDVDVIELHDCFSTNELLTYEALGLCPEGQGGALVDRGDNTYGGKWVINPSGGLISKGHPLGATGLAQCAELCWQLRGEAGKRQVPGAKVALQHNLGLGGAAVVTLYRMGFPEAASSFRTHQISAAPTSSAGDGFKANLIFKEIEKKLEEEGEEFVKKIGGIFAFKVKDGPGGKEATWVVDVKNGKGSVLPDSDKKADCTITMADSDLLALMTGKMNPQSAFFQGKLKIAGNMGLAMKLQSLQLQPDKAKL</sequence>
<dbReference type="EC" id="2.3.1.155" evidence="6 8"/>
<dbReference type="EC" id="2.3.1.176" evidence="7 8 9"/>
<dbReference type="EC" id="2.3.1.16" evidence="6 8"/>
<dbReference type="EMBL" id="M62763">
    <property type="protein sequence ID" value="AAA40622.1"/>
    <property type="molecule type" value="mRNA"/>
</dbReference>
<dbReference type="EMBL" id="M62763">
    <property type="protein sequence ID" value="AAA40623.1"/>
    <property type="status" value="ALT_INIT"/>
    <property type="molecule type" value="mRNA"/>
</dbReference>
<dbReference type="EMBL" id="M57454">
    <property type="protein sequence ID" value="AAA42121.1"/>
    <property type="molecule type" value="mRNA"/>
</dbReference>
<dbReference type="EMBL" id="M57453">
    <property type="protein sequence ID" value="AAA42122.1"/>
    <property type="molecule type" value="mRNA"/>
</dbReference>
<dbReference type="EMBL" id="M58287">
    <property type="protein sequence ID" value="AAA41726.1"/>
    <property type="molecule type" value="mRNA"/>
</dbReference>
<dbReference type="EMBL" id="BC081713">
    <property type="protein sequence ID" value="AAH81713.1"/>
    <property type="molecule type" value="mRNA"/>
</dbReference>
<dbReference type="EMBL" id="M34728">
    <property type="protein sequence ID" value="AAA42120.1"/>
    <property type="molecule type" value="mRNA"/>
</dbReference>
<dbReference type="EMBL" id="X60654">
    <property type="protein sequence ID" value="CAA43060.1"/>
    <property type="status" value="ALT_INIT"/>
    <property type="molecule type" value="mRNA"/>
</dbReference>
<dbReference type="EMBL" id="X60654">
    <property type="protein sequence ID" value="CAA43061.1"/>
    <property type="molecule type" value="mRNA"/>
</dbReference>
<dbReference type="PIR" id="A39368">
    <property type="entry name" value="A39368"/>
</dbReference>
<dbReference type="RefSeq" id="NP_612517.2">
    <property type="nucleotide sequence ID" value="NM_138508.4"/>
</dbReference>
<dbReference type="SMR" id="P11915"/>
<dbReference type="FunCoup" id="P11915">
    <property type="interactions" value="1879"/>
</dbReference>
<dbReference type="IntAct" id="P11915">
    <property type="interactions" value="1"/>
</dbReference>
<dbReference type="STRING" id="10116.ENSRNOP00000015466"/>
<dbReference type="SwissLipids" id="SLP:000001233">
    <molecule id="P11915-1"/>
</dbReference>
<dbReference type="iPTMnet" id="P11915"/>
<dbReference type="PhosphoSitePlus" id="P11915"/>
<dbReference type="jPOST" id="P11915"/>
<dbReference type="PaxDb" id="10116-ENSRNOP00000015420"/>
<dbReference type="GeneID" id="25541"/>
<dbReference type="KEGG" id="rno:25541"/>
<dbReference type="UCSC" id="RGD:3642">
    <molecule id="P11915-1"/>
    <property type="organism name" value="rat"/>
</dbReference>
<dbReference type="AGR" id="RGD:3642"/>
<dbReference type="CTD" id="6342"/>
<dbReference type="RGD" id="3642">
    <property type="gene designation" value="Scp2"/>
</dbReference>
<dbReference type="eggNOG" id="KOG1406">
    <property type="taxonomic scope" value="Eukaryota"/>
</dbReference>
<dbReference type="eggNOG" id="KOG4170">
    <property type="taxonomic scope" value="Eukaryota"/>
</dbReference>
<dbReference type="InParanoid" id="P11915"/>
<dbReference type="BioCyc" id="MetaCyc:MONOMER-14332"/>
<dbReference type="Reactome" id="R-RNO-193368">
    <property type="pathway name" value="Synthesis of bile acids and bile salts via 7alpha-hydroxycholesterol"/>
</dbReference>
<dbReference type="Reactome" id="R-RNO-2046106">
    <property type="pathway name" value="alpha-linolenic acid (ALA) metabolism"/>
</dbReference>
<dbReference type="Reactome" id="R-RNO-389887">
    <property type="pathway name" value="Beta-oxidation of pristanoyl-CoA"/>
</dbReference>
<dbReference type="Reactome" id="R-RNO-9033241">
    <property type="pathway name" value="Peroxisomal protein import"/>
</dbReference>
<dbReference type="SABIO-RK" id="P11915"/>
<dbReference type="PRO" id="PR:P11915"/>
<dbReference type="Proteomes" id="UP000002494">
    <property type="component" value="Unplaced"/>
</dbReference>
<dbReference type="GO" id="GO:0005737">
    <property type="term" value="C:cytoplasm"/>
    <property type="evidence" value="ECO:0000250"/>
    <property type="project" value="UniProtKB"/>
</dbReference>
<dbReference type="GO" id="GO:0005783">
    <property type="term" value="C:endoplasmic reticulum"/>
    <property type="evidence" value="ECO:0000250"/>
    <property type="project" value="UniProtKB"/>
</dbReference>
<dbReference type="GO" id="GO:0005739">
    <property type="term" value="C:mitochondrion"/>
    <property type="evidence" value="ECO:0000250"/>
    <property type="project" value="UniProtKB"/>
</dbReference>
<dbReference type="GO" id="GO:0005782">
    <property type="term" value="C:peroxisomal matrix"/>
    <property type="evidence" value="ECO:0000314"/>
    <property type="project" value="UniProtKB"/>
</dbReference>
<dbReference type="GO" id="GO:0005777">
    <property type="term" value="C:peroxisome"/>
    <property type="evidence" value="ECO:0000314"/>
    <property type="project" value="UniProtKB"/>
</dbReference>
<dbReference type="GO" id="GO:0032991">
    <property type="term" value="C:protein-containing complex"/>
    <property type="evidence" value="ECO:0000266"/>
    <property type="project" value="RGD"/>
</dbReference>
<dbReference type="GO" id="GO:0003988">
    <property type="term" value="F:acetyl-CoA C-acyltransferase activity"/>
    <property type="evidence" value="ECO:0000314"/>
    <property type="project" value="UniProtKB"/>
</dbReference>
<dbReference type="GO" id="GO:0050633">
    <property type="term" value="F:acetyl-CoA C-myristoyltransferase activity"/>
    <property type="evidence" value="ECO:0000314"/>
    <property type="project" value="UniProtKB"/>
</dbReference>
<dbReference type="GO" id="GO:0015485">
    <property type="term" value="F:cholesterol binding"/>
    <property type="evidence" value="ECO:0000266"/>
    <property type="project" value="RGD"/>
</dbReference>
<dbReference type="GO" id="GO:0120020">
    <property type="term" value="F:cholesterol transfer activity"/>
    <property type="evidence" value="ECO:0000314"/>
    <property type="project" value="UniProtKB"/>
</dbReference>
<dbReference type="GO" id="GO:0000062">
    <property type="term" value="F:fatty-acyl-CoA binding"/>
    <property type="evidence" value="ECO:0000266"/>
    <property type="project" value="RGD"/>
</dbReference>
<dbReference type="GO" id="GO:0042802">
    <property type="term" value="F:identical protein binding"/>
    <property type="evidence" value="ECO:0000353"/>
    <property type="project" value="RGD"/>
</dbReference>
<dbReference type="GO" id="GO:0036042">
    <property type="term" value="F:long-chain fatty acyl-CoA binding"/>
    <property type="evidence" value="ECO:0000266"/>
    <property type="project" value="RGD"/>
</dbReference>
<dbReference type="GO" id="GO:0070538">
    <property type="term" value="F:oleic acid binding"/>
    <property type="evidence" value="ECO:0000266"/>
    <property type="project" value="RGD"/>
</dbReference>
<dbReference type="GO" id="GO:0120019">
    <property type="term" value="F:phosphatidylcholine transfer activity"/>
    <property type="evidence" value="ECO:0000314"/>
    <property type="project" value="UniProtKB"/>
</dbReference>
<dbReference type="GO" id="GO:1904121">
    <property type="term" value="F:phosphatidylethanolamine transfer activity"/>
    <property type="evidence" value="ECO:0000314"/>
    <property type="project" value="RGD"/>
</dbReference>
<dbReference type="GO" id="GO:0033814">
    <property type="term" value="F:propanoyl-CoA C-acyltransferase activity"/>
    <property type="evidence" value="ECO:0007669"/>
    <property type="project" value="RHEA"/>
</dbReference>
<dbReference type="GO" id="GO:0050632">
    <property type="term" value="F:propionyl-CoA C2-trimethyltridecanoyltransferase activity"/>
    <property type="evidence" value="ECO:0000314"/>
    <property type="project" value="UniProtKB"/>
</dbReference>
<dbReference type="GO" id="GO:0044877">
    <property type="term" value="F:protein-containing complex binding"/>
    <property type="evidence" value="ECO:0000314"/>
    <property type="project" value="RGD"/>
</dbReference>
<dbReference type="GO" id="GO:0005102">
    <property type="term" value="F:signaling receptor binding"/>
    <property type="evidence" value="ECO:0000266"/>
    <property type="project" value="RGD"/>
</dbReference>
<dbReference type="GO" id="GO:0008206">
    <property type="term" value="P:bile acid metabolic process"/>
    <property type="evidence" value="ECO:0000314"/>
    <property type="project" value="UniProtKB"/>
</dbReference>
<dbReference type="GO" id="GO:0071397">
    <property type="term" value="P:cellular response to cholesterol"/>
    <property type="evidence" value="ECO:0000270"/>
    <property type="project" value="RGD"/>
</dbReference>
<dbReference type="GO" id="GO:0006635">
    <property type="term" value="P:fatty acid beta-oxidation"/>
    <property type="evidence" value="ECO:0000314"/>
    <property type="project" value="UniProtKB"/>
</dbReference>
<dbReference type="GO" id="GO:0032367">
    <property type="term" value="P:intracellular cholesterol transport"/>
    <property type="evidence" value="ECO:0000250"/>
    <property type="project" value="UniProtKB"/>
</dbReference>
<dbReference type="GO" id="GO:1901373">
    <property type="term" value="P:lipid hydroperoxide transport"/>
    <property type="evidence" value="ECO:0000266"/>
    <property type="project" value="RGD"/>
</dbReference>
<dbReference type="GO" id="GO:0043065">
    <property type="term" value="P:positive regulation of apoptotic process"/>
    <property type="evidence" value="ECO:0000314"/>
    <property type="project" value="RGD"/>
</dbReference>
<dbReference type="GO" id="GO:0045542">
    <property type="term" value="P:positive regulation of cholesterol biosynthetic process"/>
    <property type="evidence" value="ECO:0000314"/>
    <property type="project" value="RGD"/>
</dbReference>
<dbReference type="GO" id="GO:1904109">
    <property type="term" value="P:positive regulation of cholesterol import"/>
    <property type="evidence" value="ECO:0000314"/>
    <property type="project" value="RGD"/>
</dbReference>
<dbReference type="GO" id="GO:0032385">
    <property type="term" value="P:positive regulation of intracellular cholesterol transport"/>
    <property type="evidence" value="ECO:0000266"/>
    <property type="project" value="RGD"/>
</dbReference>
<dbReference type="GO" id="GO:0010893">
    <property type="term" value="P:positive regulation of steroid biosynthetic process"/>
    <property type="evidence" value="ECO:0000314"/>
    <property type="project" value="UniProtKB"/>
</dbReference>
<dbReference type="GO" id="GO:0071071">
    <property type="term" value="P:regulation of phospholipid biosynthetic process"/>
    <property type="evidence" value="ECO:0000250"/>
    <property type="project" value="UniProtKB"/>
</dbReference>
<dbReference type="GO" id="GO:0032355">
    <property type="term" value="P:response to estradiol"/>
    <property type="evidence" value="ECO:0000270"/>
    <property type="project" value="RGD"/>
</dbReference>
<dbReference type="GO" id="GO:0034699">
    <property type="term" value="P:response to luteinizing hormone"/>
    <property type="evidence" value="ECO:0000270"/>
    <property type="project" value="RGD"/>
</dbReference>
<dbReference type="CDD" id="cd00826">
    <property type="entry name" value="nondecarbox_cond_enzymes"/>
    <property type="match status" value="1"/>
</dbReference>
<dbReference type="FunFam" id="3.40.47.10:FF:000016">
    <property type="entry name" value="Non-specific lipid-transfer protein"/>
    <property type="match status" value="1"/>
</dbReference>
<dbReference type="FunFam" id="3.30.1050.10:FF:000001">
    <property type="entry name" value="Putative Non-specific lipid-transfer protein"/>
    <property type="match status" value="1"/>
</dbReference>
<dbReference type="Gene3D" id="3.40.47.10">
    <property type="match status" value="1"/>
</dbReference>
<dbReference type="Gene3D" id="3.30.1050.10">
    <property type="entry name" value="SCP2 sterol-binding domain"/>
    <property type="match status" value="1"/>
</dbReference>
<dbReference type="InterPro" id="IPR003033">
    <property type="entry name" value="SCP2_sterol-bd_dom"/>
</dbReference>
<dbReference type="InterPro" id="IPR036527">
    <property type="entry name" value="SCP2_sterol-bd_dom_sf"/>
</dbReference>
<dbReference type="InterPro" id="IPR016039">
    <property type="entry name" value="Thiolase-like"/>
</dbReference>
<dbReference type="InterPro" id="IPR020615">
    <property type="entry name" value="Thiolase_acyl_enz_int_AS"/>
</dbReference>
<dbReference type="InterPro" id="IPR055140">
    <property type="entry name" value="Thiolase_C_2"/>
</dbReference>
<dbReference type="InterPro" id="IPR020613">
    <property type="entry name" value="Thiolase_CS"/>
</dbReference>
<dbReference type="InterPro" id="IPR020616">
    <property type="entry name" value="Thiolase_N"/>
</dbReference>
<dbReference type="NCBIfam" id="NF006102">
    <property type="entry name" value="PRK08256.1"/>
    <property type="match status" value="1"/>
</dbReference>
<dbReference type="PANTHER" id="PTHR42870">
    <property type="entry name" value="ACETYL-COA C-ACETYLTRANSFERASE"/>
    <property type="match status" value="1"/>
</dbReference>
<dbReference type="PANTHER" id="PTHR42870:SF1">
    <property type="entry name" value="NON-SPECIFIC LIPID-TRANSFER PROTEIN-LIKE 2"/>
    <property type="match status" value="1"/>
</dbReference>
<dbReference type="Pfam" id="PF02036">
    <property type="entry name" value="SCP2"/>
    <property type="match status" value="1"/>
</dbReference>
<dbReference type="Pfam" id="PF22691">
    <property type="entry name" value="Thiolase_C_1"/>
    <property type="match status" value="1"/>
</dbReference>
<dbReference type="Pfam" id="PF00108">
    <property type="entry name" value="Thiolase_N"/>
    <property type="match status" value="1"/>
</dbReference>
<dbReference type="SUPFAM" id="SSF55718">
    <property type="entry name" value="SCP-like"/>
    <property type="match status" value="1"/>
</dbReference>
<dbReference type="SUPFAM" id="SSF53901">
    <property type="entry name" value="Thiolase-like"/>
    <property type="match status" value="2"/>
</dbReference>
<dbReference type="PROSITE" id="PS00098">
    <property type="entry name" value="THIOLASE_1"/>
    <property type="match status" value="1"/>
</dbReference>
<dbReference type="PROSITE" id="PS00737">
    <property type="entry name" value="THIOLASE_2"/>
    <property type="match status" value="1"/>
</dbReference>
<organism>
    <name type="scientific">Rattus norvegicus</name>
    <name type="common">Rat</name>
    <dbReference type="NCBI Taxonomy" id="10116"/>
    <lineage>
        <taxon>Eukaryota</taxon>
        <taxon>Metazoa</taxon>
        <taxon>Chordata</taxon>
        <taxon>Craniata</taxon>
        <taxon>Vertebrata</taxon>
        <taxon>Euteleostomi</taxon>
        <taxon>Mammalia</taxon>
        <taxon>Eutheria</taxon>
        <taxon>Euarchontoglires</taxon>
        <taxon>Glires</taxon>
        <taxon>Rodentia</taxon>
        <taxon>Myomorpha</taxon>
        <taxon>Muroidea</taxon>
        <taxon>Muridae</taxon>
        <taxon>Murinae</taxon>
        <taxon>Rattus</taxon>
    </lineage>
</organism>
<gene>
    <name evidence="18" type="primary">Scp2</name>
    <name type="synonym">Scp-2</name>
</gene>
<name>SCP2_RAT</name>
<comment type="function">
    <molecule>Isoform SCPx</molecule>
    <text evidence="5 6 8 9">Plays a crucial role in the peroxisomal oxidation of branched-chain fatty acids (PubMed:8063752, PubMed:9325339). Catalyzes the last step of the peroxisomal beta-oxidation of branched chain fatty acids and the side chain of the bile acid intermediates di- and trihydroxycoprostanic acids (DHCA and THCA) (PubMed:8063752, PubMed:9325339). Also active with medium and long straight chain 3-oxoacyl-CoAs (PubMed:10706581, PubMed:9325339). Stimulates the microsomal conversion of 7-dehydrocholesterol to cholesterol and transfers phosphatidylcholine and 7-dehydrocholesterol between membrances, in vitro (PubMed:8063752). Isoforms SCP2 and SCPx cooperate in peroxisomal oxidation of certain naturally occurring tetramethyl-branched fatty acyl-CoAs (PubMed:9553048).</text>
</comment>
<comment type="function">
    <molecule>Isoform SCP2</molecule>
    <text evidence="2 3 6 9">Mediates the transfer of all common phospholipids, cholesterol and gangliosides from the endoplasmic reticulum to the plasma membrane. May play a role in regulating steroidogenesis (By similarity). Stimulates the microsomal conversion of 7-dehydrocholesterol to cholesterol (PubMed:8063752). Also binds fatty acids and fatty acyl Coenzyme A (CoA) such as phytanoyl-CoA. Involved in the regulation phospholipid synthesis in endoplasmic reticulum enhancing the incorporation of exogenous fatty acid into glycerides. Seems to stimulate the rate-limiting step in phosphatidic acid formation mediated by GPAT3 (By similarity) (PubMed:9553048). Isoforms SCP2 and SCPx cooperate in peroxisomal oxidation of certain naturally occurring tetramethyl-branched fatty acyl-CoAs (PubMed:9553048).</text>
</comment>
<comment type="catalytic activity">
    <molecule>Isoform SCPx</molecule>
    <reaction evidence="14 16">
        <text>an acyl-CoA + acetyl-CoA = a 3-oxoacyl-CoA + CoA</text>
        <dbReference type="Rhea" id="RHEA:21564"/>
        <dbReference type="ChEBI" id="CHEBI:57287"/>
        <dbReference type="ChEBI" id="CHEBI:57288"/>
        <dbReference type="ChEBI" id="CHEBI:58342"/>
        <dbReference type="ChEBI" id="CHEBI:90726"/>
        <dbReference type="EC" id="2.3.1.16"/>
    </reaction>
    <physiologicalReaction direction="right-to-left" evidence="14 16">
        <dbReference type="Rhea" id="RHEA:21566"/>
    </physiologicalReaction>
</comment>
<comment type="catalytic activity">
    <molecule>Isoform SCPx</molecule>
    <reaction evidence="5 8 9">
        <text>choloyl-CoA + propanoyl-CoA = 3alpha,7alpha,12alpha-trihydroxy-24-oxo-5beta-cholestan-26-oyl-CoA + CoA</text>
        <dbReference type="Rhea" id="RHEA:16865"/>
        <dbReference type="ChEBI" id="CHEBI:57287"/>
        <dbReference type="ChEBI" id="CHEBI:57373"/>
        <dbReference type="ChEBI" id="CHEBI:57392"/>
        <dbReference type="ChEBI" id="CHEBI:58507"/>
        <dbReference type="EC" id="2.3.1.176"/>
    </reaction>
    <physiologicalReaction direction="right-to-left" evidence="13 16 17">
        <dbReference type="Rhea" id="RHEA:16867"/>
    </physiologicalReaction>
</comment>
<comment type="catalytic activity">
    <molecule>Isoform SCPx</molecule>
    <reaction evidence="7">
        <text>4,8,12-trimethyltridecanoyl-CoA + propanoyl-CoA = 3-oxopristanoyl-CoA + CoA</text>
        <dbReference type="Rhea" id="RHEA:10408"/>
        <dbReference type="ChEBI" id="CHEBI:57287"/>
        <dbReference type="ChEBI" id="CHEBI:57291"/>
        <dbReference type="ChEBI" id="CHEBI:57351"/>
        <dbReference type="ChEBI" id="CHEBI:57392"/>
        <dbReference type="EC" id="2.3.1.176"/>
    </reaction>
    <physiologicalReaction direction="right-to-left" evidence="15">
        <dbReference type="Rhea" id="RHEA:10410"/>
    </physiologicalReaction>
</comment>
<comment type="catalytic activity">
    <molecule>Isoform SCPx</molecule>
    <reaction evidence="6 8">
        <text>hexanoyl-CoA + acetyl-CoA = 3-oxooctanoyl-CoA + CoA</text>
        <dbReference type="Rhea" id="RHEA:31203"/>
        <dbReference type="ChEBI" id="CHEBI:57287"/>
        <dbReference type="ChEBI" id="CHEBI:57288"/>
        <dbReference type="ChEBI" id="CHEBI:62619"/>
        <dbReference type="ChEBI" id="CHEBI:62620"/>
    </reaction>
    <physiologicalReaction direction="right-to-left" evidence="14 16">
        <dbReference type="Rhea" id="RHEA:31205"/>
    </physiologicalReaction>
</comment>
<comment type="catalytic activity">
    <molecule>Isoform SCPx</molecule>
    <reaction evidence="6 8">
        <text>tetradecanoyl-CoA + acetyl-CoA = 3-oxohexadecanoyl-CoA + CoA</text>
        <dbReference type="Rhea" id="RHEA:18161"/>
        <dbReference type="ChEBI" id="CHEBI:57287"/>
        <dbReference type="ChEBI" id="CHEBI:57288"/>
        <dbReference type="ChEBI" id="CHEBI:57349"/>
        <dbReference type="ChEBI" id="CHEBI:57385"/>
        <dbReference type="EC" id="2.3.1.155"/>
    </reaction>
    <physiologicalReaction direction="right-to-left" evidence="14 16">
        <dbReference type="Rhea" id="RHEA:18163"/>
    </physiologicalReaction>
</comment>
<comment type="catalytic activity">
    <molecule>Isoform SCPx</molecule>
    <reaction evidence="8">
        <text>3-oxohexadecanedioyl-CoA + CoA = tetradecanedioyl-CoA + acetyl-CoA</text>
        <dbReference type="Rhea" id="RHEA:40343"/>
        <dbReference type="ChEBI" id="CHEBI:57287"/>
        <dbReference type="ChEBI" id="CHEBI:57288"/>
        <dbReference type="ChEBI" id="CHEBI:77081"/>
        <dbReference type="ChEBI" id="CHEBI:77084"/>
    </reaction>
    <physiologicalReaction direction="left-to-right" evidence="16">
        <dbReference type="Rhea" id="RHEA:40344"/>
    </physiologicalReaction>
</comment>
<comment type="catalytic activity">
    <molecule>Isoform SCPx</molecule>
    <reaction evidence="8">
        <text>propanoyl-CoA + tetradecanoyl-CoA = 3-oxo-2-methylhexadecanoyl-CoA + CoA</text>
        <dbReference type="Rhea" id="RHEA:46344"/>
        <dbReference type="ChEBI" id="CHEBI:57287"/>
        <dbReference type="ChEBI" id="CHEBI:57385"/>
        <dbReference type="ChEBI" id="CHEBI:57392"/>
        <dbReference type="ChEBI" id="CHEBI:86042"/>
    </reaction>
    <physiologicalReaction direction="right-to-left" evidence="16">
        <dbReference type="Rhea" id="RHEA:46346"/>
    </physiologicalReaction>
</comment>
<comment type="catalytic activity">
    <molecule>Isoform SCPx</molecule>
    <reaction evidence="6 8">
        <text>butanoyl-CoA + acetyl-CoA = 3-oxohexanoyl-CoA + CoA</text>
        <dbReference type="Rhea" id="RHEA:31111"/>
        <dbReference type="ChEBI" id="CHEBI:57287"/>
        <dbReference type="ChEBI" id="CHEBI:57288"/>
        <dbReference type="ChEBI" id="CHEBI:57371"/>
        <dbReference type="ChEBI" id="CHEBI:62418"/>
    </reaction>
    <physiologicalReaction direction="right-to-left" evidence="14 16">
        <dbReference type="Rhea" id="RHEA:31113"/>
    </physiologicalReaction>
</comment>
<comment type="catalytic activity">
    <molecule>Isoform SCPx</molecule>
    <reaction evidence="6 8">
        <text>octanoyl-CoA + acetyl-CoA = 3-oxodecanoyl-CoA + CoA</text>
        <dbReference type="Rhea" id="RHEA:31087"/>
        <dbReference type="ChEBI" id="CHEBI:57287"/>
        <dbReference type="ChEBI" id="CHEBI:57288"/>
        <dbReference type="ChEBI" id="CHEBI:57386"/>
        <dbReference type="ChEBI" id="CHEBI:62548"/>
    </reaction>
    <physiologicalReaction direction="right-to-left" evidence="14 16">
        <dbReference type="Rhea" id="RHEA:31089"/>
    </physiologicalReaction>
</comment>
<comment type="catalytic activity">
    <molecule>Isoform SCPx</molecule>
    <reaction evidence="8">
        <text>decanoyl-CoA + acetyl-CoA = 3-oxododecanoyl-CoA + CoA</text>
        <dbReference type="Rhea" id="RHEA:31183"/>
        <dbReference type="ChEBI" id="CHEBI:57287"/>
        <dbReference type="ChEBI" id="CHEBI:57288"/>
        <dbReference type="ChEBI" id="CHEBI:61430"/>
        <dbReference type="ChEBI" id="CHEBI:62615"/>
    </reaction>
    <physiologicalReaction direction="right-to-left" evidence="16">
        <dbReference type="Rhea" id="RHEA:31185"/>
    </physiologicalReaction>
</comment>
<comment type="catalytic activity">
    <molecule>Isoform SCPx</molecule>
    <reaction evidence="6 8">
        <text>dodecanoyl-CoA + acetyl-CoA = 3-oxotetradecanoyl-CoA + CoA</text>
        <dbReference type="Rhea" id="RHEA:31091"/>
        <dbReference type="ChEBI" id="CHEBI:57287"/>
        <dbReference type="ChEBI" id="CHEBI:57288"/>
        <dbReference type="ChEBI" id="CHEBI:57375"/>
        <dbReference type="ChEBI" id="CHEBI:62543"/>
    </reaction>
    <physiologicalReaction direction="right-to-left" evidence="14 16">
        <dbReference type="Rhea" id="RHEA:31093"/>
    </physiologicalReaction>
</comment>
<comment type="catalytic activity">
    <molecule>Isoform SCPx</molecule>
    <reaction evidence="6 7">
        <text>hexadecanoyl-CoA + acetyl-CoA = 3-oxooctadecanoyl-CoA + CoA</text>
        <dbReference type="Rhea" id="RHEA:35279"/>
        <dbReference type="ChEBI" id="CHEBI:57287"/>
        <dbReference type="ChEBI" id="CHEBI:57288"/>
        <dbReference type="ChEBI" id="CHEBI:57379"/>
        <dbReference type="ChEBI" id="CHEBI:71407"/>
    </reaction>
    <physiologicalReaction direction="right-to-left" evidence="14 15">
        <dbReference type="Rhea" id="RHEA:35281"/>
    </physiologicalReaction>
</comment>
<comment type="catalytic activity">
    <molecule>Isoform SCPx</molecule>
    <reaction evidence="6">
        <text>3-oxo-(9Z-octadecenoyl)-CoA + CoA = (7Z)-hexadecenoyl-CoA + acetyl-CoA</text>
        <dbReference type="Rhea" id="RHEA:47400"/>
        <dbReference type="ChEBI" id="CHEBI:57287"/>
        <dbReference type="ChEBI" id="CHEBI:57288"/>
        <dbReference type="ChEBI" id="CHEBI:87695"/>
        <dbReference type="ChEBI" id="CHEBI:87698"/>
    </reaction>
    <physiologicalReaction direction="left-to-right" evidence="14">
        <dbReference type="Rhea" id="RHEA:47401"/>
    </physiologicalReaction>
</comment>
<comment type="catalytic activity">
    <molecule>Isoform SCPx</molecule>
    <reaction evidence="6">
        <text>7-dehydrocholesterol(in) = 7-dehydrocholesterol(out)</text>
        <dbReference type="Rhea" id="RHEA:62960"/>
        <dbReference type="ChEBI" id="CHEBI:17759"/>
    </reaction>
</comment>
<comment type="catalytic activity">
    <molecule>Isoform SCP2</molecule>
    <reaction evidence="6">
        <text>7-dehydrocholesterol(in) = 7-dehydrocholesterol(out)</text>
        <dbReference type="Rhea" id="RHEA:62960"/>
        <dbReference type="ChEBI" id="CHEBI:17759"/>
    </reaction>
</comment>
<comment type="biophysicochemical properties">
    <molecule>Isoform SCPx</molecule>
    <kinetics>
        <KM evidence="8">4.6 uM for 3-oxooctanoyl-CoA</KM>
        <KM evidence="8">4 uM for 3-oxohexadecanoyl-CoA</KM>
        <KM evidence="8">2.9 uM for 3-oxohexadecanedioyl-CoA</KM>
        <KM evidence="8">3 uM for 3-oxo-2-methylpalmitoyl-CoA</KM>
        <KM evidence="8">2.8 uM for 24-oxo-THC-CoA</KM>
        <KM evidence="5">37.7 uM for CoA</KM>
        <Vmax evidence="8">78.0 umol/min/mg enzyme towards 3-oxooctanoyl-CoA</Vmax>
        <Vmax evidence="8">20.8 umol/min/mg enzyme towards 3-oxopalmitoyl-CoA</Vmax>
        <Vmax evidence="8">29.4 umol/min/mg enzyme towards 3-oxohexadecanedioyl-CoA</Vmax>
        <Vmax evidence="8">38.0 umol/min/mg enzyme towards 3-oxo-2-oxohexadecanoyl-CoA</Vmax>
        <Vmax evidence="8">9.6 umol/min/mg enzyme towards 24-oxo-THC-CoA</Vmax>
    </kinetics>
    <phDependence>
        <text evidence="5 8">Optimum pH is 7.6 with 3-oxooctanoyl-CoA and 3-oxo-2-methylpalmitoyl-CoA as substrates (PubMed:9325339). Optimum pH is 9.5 with 3alpha,7alpha,12alpha-trihydroxy-24-oxo-5beta-cholestan-26-oyl-CoA as substrate (PubMed:10706581).</text>
    </phDependence>
</comment>
<comment type="subunit">
    <molecule>Isoform SCP2</molecule>
    <text evidence="2">Interacts with PEX5; the interaction is essential for peroxisomal import.</text>
</comment>
<comment type="subcellular location">
    <molecule>Isoform SCP2</molecule>
    <subcellularLocation>
        <location evidence="3">Peroxisome</location>
    </subcellularLocation>
    <subcellularLocation>
        <location evidence="2">Cytoplasm</location>
    </subcellularLocation>
    <subcellularLocation>
        <location evidence="2">Mitochondrion</location>
    </subcellularLocation>
</comment>
<comment type="subcellular location">
    <molecule>Isoform SCPx</molecule>
    <subcellularLocation>
        <location evidence="6 8">Peroxisome</location>
    </subcellularLocation>
</comment>
<comment type="alternative products">
    <event type="alternative initiation"/>
    <isoform>
        <id>P11915-1</id>
        <name>SCPx</name>
        <name evidence="11">SCP-2/thiolase</name>
        <sequence type="displayed"/>
    </isoform>
    <isoform>
        <id>P11915-2</id>
        <name>SCP2</name>
        <sequence type="described" ref="VSP_018897"/>
    </isoform>
</comment>
<comment type="tissue specificity">
    <text>Liver &gt; intestine &gt; brain &gt; lung, colon, stomach, spleen, kidney, heart and ovary.</text>
</comment>
<comment type="tissue specificity">
    <molecule>Isoform SCPx</molecule>
    <text evidence="6">Expressed in liver (at protein level).</text>
</comment>
<comment type="tissue specificity">
    <molecule>Isoform SCP2</molecule>
    <text evidence="6">Expressed in liver (at protein level).</text>
</comment>
<comment type="PTM">
    <molecule>Isoform SCP2</molecule>
    <text evidence="1">preSCP2, a protein with a molecular mass of about 15 kDa, is processed into its mature form (SCP2) by proteolytic cleavage of a 20 residue leader sequence after translocation into peroxisomes.</text>
</comment>
<comment type="miscellaneous">
    <molecule>Isoform SCP2</molecule>
    <text evidence="12">Contains a putative mitochondrial transit peptide at positions 1-20.</text>
</comment>
<comment type="similarity">
    <text evidence="12">In the N-terminal section; belongs to the thiolase-like superfamily. Thiolase family.</text>
</comment>
<comment type="sequence caution" evidence="12">
    <conflict type="erroneous initiation">
        <sequence resource="EMBL-CDS" id="AAA40623"/>
    </conflict>
    <text>Truncated N-terminus.</text>
</comment>
<comment type="sequence caution" evidence="12">
    <conflict type="erroneous initiation">
        <sequence resource="EMBL-CDS" id="CAA43060"/>
    </conflict>
    <text>Truncated N-terminus.</text>
</comment>
<proteinExistence type="evidence at protein level"/>
<keyword id="KW-0007">Acetylation</keyword>
<keyword id="KW-0012">Acyltransferase</keyword>
<keyword id="KW-0024">Alternative initiation</keyword>
<keyword id="KW-0963">Cytoplasm</keyword>
<keyword id="KW-0903">Direct protein sequencing</keyword>
<keyword id="KW-0443">Lipid metabolism</keyword>
<keyword id="KW-0445">Lipid transport</keyword>
<keyword id="KW-0446">Lipid-binding</keyword>
<keyword id="KW-0496">Mitochondrion</keyword>
<keyword id="KW-0576">Peroxisome</keyword>
<keyword id="KW-0597">Phosphoprotein</keyword>
<keyword id="KW-1185">Reference proteome</keyword>
<keyword id="KW-0808">Transferase</keyword>
<keyword id="KW-0813">Transport</keyword>
<accession>P11915</accession>
<accession>Q63383</accession>
<accession>Q642G0</accession>
<protein>
    <recommendedName>
        <fullName evidence="12">Sterol carrier protein 2</fullName>
        <shortName>SCP-2</shortName>
    </recommendedName>
    <alternativeName>
        <fullName evidence="10 11">Acetyl-CoA C-myristoyltransferase</fullName>
        <ecNumber evidence="6 8">2.3.1.155</ecNumber>
    </alternativeName>
    <alternativeName>
        <fullName>Non-specific lipid-transfer protein</fullName>
        <shortName>NSL-TP</shortName>
    </alternativeName>
    <alternativeName>
        <fullName>Propanoyl-CoA C-acyltransferase</fullName>
        <ecNumber evidence="7 8 9">2.3.1.176</ecNumber>
    </alternativeName>
    <alternativeName>
        <fullName evidence="10">SCP-2/3-oxoacyl-CoA thiolase</fullName>
    </alternativeName>
    <alternativeName>
        <fullName evidence="11">SCP-2/thiolase</fullName>
        <ecNumber evidence="6 8">2.3.1.16</ecNumber>
    </alternativeName>
    <alternativeName>
        <fullName>SCP-chi</fullName>
    </alternativeName>
    <alternativeName>
        <fullName>Sterol carrier protein X</fullName>
        <shortName>SCP-X</shortName>
    </alternativeName>
</protein>
<evidence type="ECO:0000250" key="1">
    <source>
        <dbReference type="UniProtKB" id="O62742"/>
    </source>
</evidence>
<evidence type="ECO:0000250" key="2">
    <source>
        <dbReference type="UniProtKB" id="P22307"/>
    </source>
</evidence>
<evidence type="ECO:0000250" key="3">
    <source>
        <dbReference type="UniProtKB" id="P32020"/>
    </source>
</evidence>
<evidence type="ECO:0000255" key="4"/>
<evidence type="ECO:0000269" key="5">
    <source>
    </source>
</evidence>
<evidence type="ECO:0000269" key="6">
    <source>
    </source>
</evidence>
<evidence type="ECO:0000269" key="7">
    <source>
    </source>
</evidence>
<evidence type="ECO:0000269" key="8">
    <source>
    </source>
</evidence>
<evidence type="ECO:0000269" key="9">
    <source>
    </source>
</evidence>
<evidence type="ECO:0000303" key="10">
    <source>
    </source>
</evidence>
<evidence type="ECO:0000303" key="11">
    <source>
    </source>
</evidence>
<evidence type="ECO:0000305" key="12"/>
<evidence type="ECO:0000305" key="13">
    <source>
    </source>
</evidence>
<evidence type="ECO:0000305" key="14">
    <source>
    </source>
</evidence>
<evidence type="ECO:0000305" key="15">
    <source>
    </source>
</evidence>
<evidence type="ECO:0000305" key="16">
    <source>
    </source>
</evidence>
<evidence type="ECO:0000305" key="17">
    <source>
    </source>
</evidence>
<evidence type="ECO:0000312" key="18">
    <source>
        <dbReference type="RGD" id="3642"/>
    </source>
</evidence>
<evidence type="ECO:0007744" key="19">
    <source>
    </source>
</evidence>
<feature type="chain" id="PRO_0000034097" description="Sterol carrier protein 2">
    <location>
        <begin position="1"/>
        <end position="547"/>
    </location>
</feature>
<feature type="domain" description="SCP2">
    <location>
        <begin position="433"/>
        <end position="543"/>
    </location>
</feature>
<feature type="short sequence motif" description="Microbody targeting signal" evidence="4">
    <location>
        <begin position="545"/>
        <end position="547"/>
    </location>
</feature>
<feature type="modified residue" description="Phosphoserine" evidence="19">
    <location>
        <position position="3"/>
    </location>
</feature>
<feature type="modified residue" description="Phosphoserine" evidence="19">
    <location>
        <position position="8"/>
    </location>
</feature>
<feature type="modified residue" description="N6-succinyllysine" evidence="3">
    <location>
        <position position="40"/>
    </location>
</feature>
<feature type="modified residue" description="N6-acetyllysine; alternate" evidence="3">
    <location>
        <position position="132"/>
    </location>
</feature>
<feature type="modified residue" description="N6-succinyllysine; alternate" evidence="3">
    <location>
        <position position="132"/>
    </location>
</feature>
<feature type="modified residue" description="N6-succinyllysine" evidence="3">
    <location>
        <position position="168"/>
    </location>
</feature>
<feature type="modified residue" description="N6-acetyllysine" evidence="3">
    <location>
        <position position="177"/>
    </location>
</feature>
<feature type="modified residue" description="N6-acetyllysine; alternate" evidence="2">
    <location>
        <position position="183"/>
    </location>
</feature>
<feature type="modified residue" description="N6-succinyllysine; alternate" evidence="3">
    <location>
        <position position="183"/>
    </location>
</feature>
<feature type="modified residue" description="N6-succinyllysine" evidence="3">
    <location>
        <position position="211"/>
    </location>
</feature>
<feature type="modified residue" description="N6-succinyllysine" evidence="3">
    <location>
        <position position="282"/>
    </location>
</feature>
<feature type="modified residue" description="N6-acetyllysine; alternate" evidence="3">
    <location>
        <position position="341"/>
    </location>
</feature>
<feature type="modified residue" description="N6-succinyllysine; alternate" evidence="3">
    <location>
        <position position="341"/>
    </location>
</feature>
<feature type="modified residue" description="N6-acetyllysine; alternate" evidence="3">
    <location>
        <position position="432"/>
    </location>
</feature>
<feature type="modified residue" description="N6-succinyllysine; alternate" evidence="3">
    <location>
        <position position="432"/>
    </location>
</feature>
<feature type="modified residue" description="N6-acetyllysine; alternate" evidence="2">
    <location>
        <position position="438"/>
    </location>
</feature>
<feature type="modified residue" description="N6-succinyllysine; alternate" evidence="3">
    <location>
        <position position="438"/>
    </location>
</feature>
<feature type="modified residue" description="N6-acetyllysine; alternate" evidence="3">
    <location>
        <position position="443"/>
    </location>
</feature>
<feature type="modified residue" description="N6-succinyllysine; alternate" evidence="3">
    <location>
        <position position="443"/>
    </location>
</feature>
<feature type="modified residue" description="N6-acetyllysine; alternate" evidence="3">
    <location>
        <position position="453"/>
    </location>
</feature>
<feature type="modified residue" description="N6-succinyllysine; alternate" evidence="3">
    <location>
        <position position="453"/>
    </location>
</feature>
<feature type="modified residue" description="N6-succinyllysine" evidence="3">
    <location>
        <position position="464"/>
    </location>
</feature>
<feature type="modified residue" description="N6-acetyllysine; alternate" evidence="2">
    <location>
        <position position="470"/>
    </location>
</feature>
<feature type="modified residue" description="N6-succinyllysine; alternate" evidence="3">
    <location>
        <position position="470"/>
    </location>
</feature>
<feature type="modified residue" description="N6-succinyllysine" evidence="3">
    <location>
        <position position="479"/>
    </location>
</feature>
<feature type="modified residue" description="N6-acetyllysine" evidence="3">
    <location>
        <position position="491"/>
    </location>
</feature>
<feature type="modified residue" description="N6-succinyllysine" evidence="3">
    <location>
        <position position="492"/>
    </location>
</feature>
<feature type="modified residue" description="N6-succinyllysine" evidence="3">
    <location>
        <position position="511"/>
    </location>
</feature>
<feature type="modified residue" description="Phosphoserine" evidence="3">
    <location>
        <position position="516"/>
    </location>
</feature>
<feature type="modified residue" description="N6-succinyllysine" evidence="3">
    <location>
        <position position="522"/>
    </location>
</feature>
<feature type="modified residue" description="N6-succinyllysine" evidence="3">
    <location>
        <position position="534"/>
    </location>
</feature>
<feature type="modified residue" description="Phosphoserine" evidence="19">
    <location>
        <position position="537"/>
    </location>
</feature>
<feature type="modified residue" description="N6-succinyllysine" evidence="3">
    <location>
        <position position="544"/>
    </location>
</feature>
<feature type="splice variant" id="VSP_018897" description="In isoform SCP2." evidence="12">
    <location>
        <begin position="1"/>
        <end position="404"/>
    </location>
</feature>
<feature type="sequence conflict" description="In Ref. 2; AAA40622/CAA43061 and 4; AAH81713." evidence="12" ref="2 4">
    <original>P</original>
    <variation>R</variation>
    <location>
        <position position="12"/>
    </location>
</feature>
<feature type="sequence conflict" description="In Ref. 2; AAA40622 and 4; AAH81713." evidence="12" ref="2 4">
    <original>R</original>
    <variation>A</variation>
    <location>
        <position position="50"/>
    </location>
</feature>
<feature type="sequence conflict" description="In Ref. 1; AAA42122." evidence="12" ref="1">
    <original>S</original>
    <variation>T</variation>
    <location>
        <position position="265"/>
    </location>
</feature>
<feature type="sequence conflict" description="In Ref. 8; AA sequence." evidence="12" ref="8">
    <original>AG</original>
    <variation>SV</variation>
    <location>
        <begin position="427"/>
        <end position="428"/>
    </location>
</feature>
<feature type="sequence conflict" description="In Ref. 8; AA sequence." evidence="12" ref="8">
    <original>I</original>
    <variation>V</variation>
    <location>
        <position position="436"/>
    </location>
</feature>
<feature type="sequence conflict" description="In Ref. 8; AA sequence." evidence="12" ref="8">
    <original>E</original>
    <variation>D</variation>
    <location>
        <position position="446"/>
    </location>
</feature>
<feature type="sequence conflict" description="In Ref. 8; AA sequence." evidence="12" ref="8">
    <original>E</original>
    <variation>Q</variation>
    <location>
        <position position="450"/>
    </location>
</feature>
<feature type="sequence conflict" description="In Ref. 8; AA sequence." evidence="12" ref="8">
    <original>D</original>
    <variation>N</variation>
    <location>
        <position position="488"/>
    </location>
</feature>
<feature type="sequence conflict" description="In Ref. 8; AA sequence." evidence="12" ref="8">
    <original>S</original>
    <variation>T</variation>
    <location>
        <position position="516"/>
    </location>
</feature>
<feature type="sequence conflict" description="In Ref. 8; AA sequence." evidence="12" ref="8">
    <original>A</original>
    <variation>N</variation>
    <location>
        <position position="526"/>
    </location>
</feature>
<feature type="sequence conflict" description="In Ref. 8; AA sequence." evidence="12" ref="8">
    <original>S</original>
    <variation>N</variation>
    <location>
        <position position="537"/>
    </location>
</feature>
<feature type="sequence conflict" description="In Ref. 8; AA sequence." evidence="12" ref="8">
    <original>D</original>
    <variation>G</variation>
    <location>
        <position position="543"/>
    </location>
</feature>
<feature type="site" description="Cleavage" evidence="1">
    <location sequence="P11915-2">
        <begin position="20"/>
        <end position="21"/>
    </location>
</feature>